<sequence length="216" mass="24810">MARIIDLVPWDDGSTHVYASPAILLPMERQRNQLAGVKQQLYHPALPTLRHMDRDTVKACLPDEHCQSTTYCRKDEFDNAHFTLLGVPNKPLQCLDITATGQKLRNRYHEGKLAPIAPGINRVDWPCFTRAIEDWSHFVSSAGEFKLPCLRKRAEGLSGYAVRYLKPDVTQTWRYCLSQNPSLDRYGQKPLPFDSLNTFRSFGSSYSRVNYLTPWH</sequence>
<name>SMIP8_HUMAN</name>
<dbReference type="EMBL" id="AY363222">
    <property type="protein sequence ID" value="AAR18688.1"/>
    <property type="status" value="ALT_INIT"/>
    <property type="molecule type" value="mRNA"/>
</dbReference>
<dbReference type="EMBL" id="AY363223">
    <property type="protein sequence ID" value="AAR18689.1"/>
    <property type="status" value="ALT_INIT"/>
    <property type="molecule type" value="mRNA"/>
</dbReference>
<dbReference type="EMBL" id="AC010543">
    <property type="status" value="NOT_ANNOTATED_CDS"/>
    <property type="molecule type" value="Genomic_DNA"/>
</dbReference>
<dbReference type="EMBL" id="BC104458">
    <property type="protein sequence ID" value="AAI04459.1"/>
    <property type="status" value="ALT_INIT"/>
    <property type="molecule type" value="mRNA"/>
</dbReference>
<dbReference type="EMBL" id="BC104459">
    <property type="protein sequence ID" value="AAI04460.1"/>
    <property type="status" value="ALT_INIT"/>
    <property type="molecule type" value="mRNA"/>
</dbReference>
<dbReference type="CCDS" id="CCDS10790.2">
    <molecule id="Q6URK8-2"/>
</dbReference>
<dbReference type="CCDS" id="CCDS45496.2">
    <molecule id="Q6URK8-1"/>
</dbReference>
<dbReference type="RefSeq" id="NP_950247.3">
    <molecule id="Q6URK8-2"/>
    <property type="nucleotide sequence ID" value="NM_199046.3"/>
</dbReference>
<dbReference type="RefSeq" id="NP_955535.3">
    <molecule id="Q6URK8-1"/>
    <property type="nucleotide sequence ID" value="NM_199456.3"/>
</dbReference>
<dbReference type="SMR" id="Q6URK8"/>
<dbReference type="BioGRID" id="131919">
    <property type="interactions" value="5"/>
</dbReference>
<dbReference type="FunCoup" id="Q6URK8">
    <property type="interactions" value="6"/>
</dbReference>
<dbReference type="IntAct" id="Q6URK8">
    <property type="interactions" value="4"/>
</dbReference>
<dbReference type="STRING" id="9606.ENSP00000290871"/>
<dbReference type="PhosphoSitePlus" id="Q6URK8"/>
<dbReference type="BioMuta" id="TEPP"/>
<dbReference type="DMDM" id="308153544"/>
<dbReference type="MassIVE" id="Q6URK8"/>
<dbReference type="PaxDb" id="9606-ENSP00000290871"/>
<dbReference type="PeptideAtlas" id="Q6URK8"/>
<dbReference type="ProteomicsDB" id="67422">
    <molecule id="Q6URK8-1"/>
</dbReference>
<dbReference type="ProteomicsDB" id="67423">
    <molecule id="Q6URK8-2"/>
</dbReference>
<dbReference type="TopDownProteomics" id="Q6URK8-2">
    <molecule id="Q6URK8-2"/>
</dbReference>
<dbReference type="Antibodypedia" id="62568">
    <property type="antibodies" value="5 antibodies from 5 providers"/>
</dbReference>
<dbReference type="DNASU" id="374739"/>
<dbReference type="Ensembl" id="ENST00000290871.10">
    <molecule id="Q6URK8-2"/>
    <property type="protein sequence ID" value="ENSP00000290871.6"/>
    <property type="gene ID" value="ENSG00000159648.13"/>
</dbReference>
<dbReference type="Ensembl" id="ENST00000441824.4">
    <molecule id="Q6URK8-1"/>
    <property type="protein sequence ID" value="ENSP00000401917.3"/>
    <property type="gene ID" value="ENSG00000159648.13"/>
</dbReference>
<dbReference type="GeneID" id="374739"/>
<dbReference type="KEGG" id="hsa:374739"/>
<dbReference type="MANE-Select" id="ENST00000441824.4">
    <property type="protein sequence ID" value="ENSP00000401917.3"/>
    <property type="RefSeq nucleotide sequence ID" value="NM_199456.3"/>
    <property type="RefSeq protein sequence ID" value="NP_955535.3"/>
</dbReference>
<dbReference type="UCSC" id="uc002emv.5">
    <molecule id="Q6URK8-1"/>
    <property type="organism name" value="human"/>
</dbReference>
<dbReference type="AGR" id="HGNC:33745"/>
<dbReference type="CTD" id="374739"/>
<dbReference type="DisGeNET" id="374739"/>
<dbReference type="GeneCards" id="SPMIP8"/>
<dbReference type="HGNC" id="HGNC:33745">
    <property type="gene designation" value="SPMIP8"/>
</dbReference>
<dbReference type="HPA" id="ENSG00000159648">
    <property type="expression patterns" value="Tissue enriched (testis)"/>
</dbReference>
<dbReference type="MIM" id="610264">
    <property type="type" value="gene"/>
</dbReference>
<dbReference type="neXtProt" id="NX_Q6URK8"/>
<dbReference type="OpenTargets" id="ENSG00000159648"/>
<dbReference type="PharmGKB" id="PA165450719"/>
<dbReference type="VEuPathDB" id="HostDB:ENSG00000159648"/>
<dbReference type="eggNOG" id="ENOG502R4EY">
    <property type="taxonomic scope" value="Eukaryota"/>
</dbReference>
<dbReference type="GeneTree" id="ENSGT00390000013928"/>
<dbReference type="HOGENOM" id="CLU_081890_0_0_1"/>
<dbReference type="InParanoid" id="Q6URK8"/>
<dbReference type="PAN-GO" id="Q6URK8">
    <property type="GO annotations" value="0 GO annotations based on evolutionary models"/>
</dbReference>
<dbReference type="PhylomeDB" id="Q6URK8"/>
<dbReference type="TreeFam" id="TF329060"/>
<dbReference type="PathwayCommons" id="Q6URK8"/>
<dbReference type="SignaLink" id="Q6URK8"/>
<dbReference type="BioGRID-ORCS" id="374739">
    <property type="hits" value="9 hits in 1141 CRISPR screens"/>
</dbReference>
<dbReference type="GenomeRNAi" id="374739"/>
<dbReference type="Pharos" id="Q6URK8">
    <property type="development level" value="Tdark"/>
</dbReference>
<dbReference type="PRO" id="PR:Q6URK8"/>
<dbReference type="Proteomes" id="UP000005640">
    <property type="component" value="Chromosome 16"/>
</dbReference>
<dbReference type="RNAct" id="Q6URK8">
    <property type="molecule type" value="protein"/>
</dbReference>
<dbReference type="Bgee" id="ENSG00000159648">
    <property type="expression patterns" value="Expressed in left testis and 97 other cell types or tissues"/>
</dbReference>
<dbReference type="GO" id="GO:0160111">
    <property type="term" value="C:axonemal A tubule inner sheath"/>
    <property type="evidence" value="ECO:0000318"/>
    <property type="project" value="GO_Central"/>
</dbReference>
<dbReference type="GO" id="GO:0036126">
    <property type="term" value="C:sperm flagellum"/>
    <property type="evidence" value="ECO:0007669"/>
    <property type="project" value="Ensembl"/>
</dbReference>
<dbReference type="GO" id="GO:0030317">
    <property type="term" value="P:flagellated sperm motility"/>
    <property type="evidence" value="ECO:0007669"/>
    <property type="project" value="Ensembl"/>
</dbReference>
<dbReference type="InterPro" id="IPR034584">
    <property type="entry name" value="SPMIP8"/>
</dbReference>
<dbReference type="PANTHER" id="PTHR35348">
    <property type="entry name" value="TESTIS, PROSTATE AND PLACENTA-EXPRESSED PROTEIN"/>
    <property type="match status" value="1"/>
</dbReference>
<dbReference type="PANTHER" id="PTHR35348:SF1">
    <property type="entry name" value="TESTIS, PROSTATE AND PLACENTA-EXPRESSED PROTEIN"/>
    <property type="match status" value="1"/>
</dbReference>
<dbReference type="Pfam" id="PF22574">
    <property type="entry name" value="SPMIP8"/>
    <property type="match status" value="1"/>
</dbReference>
<reference key="1">
    <citation type="journal article" date="2003" name="Biochem. Biophys. Res. Commun.">
        <title>TEPP, a new gene specifically expressed in testis, prostate, and placenta and well conserved in chordates.</title>
        <authorList>
            <person name="Bera T.K."/>
            <person name="Hahn Y."/>
            <person name="Lee B."/>
            <person name="Pastan I.H."/>
        </authorList>
    </citation>
    <scope>NUCLEOTIDE SEQUENCE [MRNA] (ISOFORMS 1 AND 2)</scope>
    <scope>TISSUE SPECIFICITY</scope>
    <source>
        <tissue>Prostate</tissue>
    </source>
</reference>
<reference key="2">
    <citation type="journal article" date="2004" name="Nature">
        <title>The sequence and analysis of duplication-rich human chromosome 16.</title>
        <authorList>
            <person name="Martin J."/>
            <person name="Han C."/>
            <person name="Gordon L.A."/>
            <person name="Terry A."/>
            <person name="Prabhakar S."/>
            <person name="She X."/>
            <person name="Xie G."/>
            <person name="Hellsten U."/>
            <person name="Chan Y.M."/>
            <person name="Altherr M."/>
            <person name="Couronne O."/>
            <person name="Aerts A."/>
            <person name="Bajorek E."/>
            <person name="Black S."/>
            <person name="Blumer H."/>
            <person name="Branscomb E."/>
            <person name="Brown N.C."/>
            <person name="Bruno W.J."/>
            <person name="Buckingham J.M."/>
            <person name="Callen D.F."/>
            <person name="Campbell C.S."/>
            <person name="Campbell M.L."/>
            <person name="Campbell E.W."/>
            <person name="Caoile C."/>
            <person name="Challacombe J.F."/>
            <person name="Chasteen L.A."/>
            <person name="Chertkov O."/>
            <person name="Chi H.C."/>
            <person name="Christensen M."/>
            <person name="Clark L.M."/>
            <person name="Cohn J.D."/>
            <person name="Denys M."/>
            <person name="Detter J.C."/>
            <person name="Dickson M."/>
            <person name="Dimitrijevic-Bussod M."/>
            <person name="Escobar J."/>
            <person name="Fawcett J.J."/>
            <person name="Flowers D."/>
            <person name="Fotopulos D."/>
            <person name="Glavina T."/>
            <person name="Gomez M."/>
            <person name="Gonzales E."/>
            <person name="Goodstein D."/>
            <person name="Goodwin L.A."/>
            <person name="Grady D.L."/>
            <person name="Grigoriev I."/>
            <person name="Groza M."/>
            <person name="Hammon N."/>
            <person name="Hawkins T."/>
            <person name="Haydu L."/>
            <person name="Hildebrand C.E."/>
            <person name="Huang W."/>
            <person name="Israni S."/>
            <person name="Jett J."/>
            <person name="Jewett P.B."/>
            <person name="Kadner K."/>
            <person name="Kimball H."/>
            <person name="Kobayashi A."/>
            <person name="Krawczyk M.-C."/>
            <person name="Leyba T."/>
            <person name="Longmire J.L."/>
            <person name="Lopez F."/>
            <person name="Lou Y."/>
            <person name="Lowry S."/>
            <person name="Ludeman T."/>
            <person name="Manohar C.F."/>
            <person name="Mark G.A."/>
            <person name="McMurray K.L."/>
            <person name="Meincke L.J."/>
            <person name="Morgan J."/>
            <person name="Moyzis R.K."/>
            <person name="Mundt M.O."/>
            <person name="Munk A.C."/>
            <person name="Nandkeshwar R.D."/>
            <person name="Pitluck S."/>
            <person name="Pollard M."/>
            <person name="Predki P."/>
            <person name="Parson-Quintana B."/>
            <person name="Ramirez L."/>
            <person name="Rash S."/>
            <person name="Retterer J."/>
            <person name="Ricke D.O."/>
            <person name="Robinson D.L."/>
            <person name="Rodriguez A."/>
            <person name="Salamov A."/>
            <person name="Saunders E.H."/>
            <person name="Scott D."/>
            <person name="Shough T."/>
            <person name="Stallings R.L."/>
            <person name="Stalvey M."/>
            <person name="Sutherland R.D."/>
            <person name="Tapia R."/>
            <person name="Tesmer J.G."/>
            <person name="Thayer N."/>
            <person name="Thompson L.S."/>
            <person name="Tice H."/>
            <person name="Torney D.C."/>
            <person name="Tran-Gyamfi M."/>
            <person name="Tsai M."/>
            <person name="Ulanovsky L.E."/>
            <person name="Ustaszewska A."/>
            <person name="Vo N."/>
            <person name="White P.S."/>
            <person name="Williams A.L."/>
            <person name="Wills P.L."/>
            <person name="Wu J.-R."/>
            <person name="Wu K."/>
            <person name="Yang J."/>
            <person name="DeJong P."/>
            <person name="Bruce D."/>
            <person name="Doggett N.A."/>
            <person name="Deaven L."/>
            <person name="Schmutz J."/>
            <person name="Grimwood J."/>
            <person name="Richardson P."/>
            <person name="Rokhsar D.S."/>
            <person name="Eichler E.E."/>
            <person name="Gilna P."/>
            <person name="Lucas S.M."/>
            <person name="Myers R.M."/>
            <person name="Rubin E.M."/>
            <person name="Pennacchio L.A."/>
        </authorList>
    </citation>
    <scope>NUCLEOTIDE SEQUENCE [LARGE SCALE GENOMIC DNA]</scope>
</reference>
<reference key="3">
    <citation type="journal article" date="2004" name="Genome Res.">
        <title>The status, quality, and expansion of the NIH full-length cDNA project: the Mammalian Gene Collection (MGC).</title>
        <authorList>
            <consortium name="The MGC Project Team"/>
        </authorList>
    </citation>
    <scope>NUCLEOTIDE SEQUENCE [LARGE SCALE MRNA] (ISOFORM 1)</scope>
</reference>
<evidence type="ECO:0000250" key="1">
    <source>
        <dbReference type="UniProtKB" id="Q6IMH0"/>
    </source>
</evidence>
<evidence type="ECO:0000269" key="2">
    <source>
    </source>
</evidence>
<evidence type="ECO:0000303" key="3">
    <source>
    </source>
</evidence>
<evidence type="ECO:0000305" key="4"/>
<evidence type="ECO:0000305" key="5">
    <source>
    </source>
</evidence>
<evidence type="ECO:0000305" key="6">
    <source>
    </source>
</evidence>
<evidence type="ECO:0000312" key="7">
    <source>
        <dbReference type="HGNC" id="HGNC:33745"/>
    </source>
</evidence>
<accession>Q6URK8</accession>
<accession>Q6URK7</accession>
<proteinExistence type="evidence at protein level"/>
<gene>
    <name evidence="7" type="primary">SPMIP8</name>
    <name type="synonym">TEPP</name>
</gene>
<organism>
    <name type="scientific">Homo sapiens</name>
    <name type="common">Human</name>
    <dbReference type="NCBI Taxonomy" id="9606"/>
    <lineage>
        <taxon>Eukaryota</taxon>
        <taxon>Metazoa</taxon>
        <taxon>Chordata</taxon>
        <taxon>Craniata</taxon>
        <taxon>Vertebrata</taxon>
        <taxon>Euteleostomi</taxon>
        <taxon>Mammalia</taxon>
        <taxon>Eutheria</taxon>
        <taxon>Euarchontoglires</taxon>
        <taxon>Primates</taxon>
        <taxon>Haplorrhini</taxon>
        <taxon>Catarrhini</taxon>
        <taxon>Hominidae</taxon>
        <taxon>Homo</taxon>
    </lineage>
</organism>
<protein>
    <recommendedName>
        <fullName evidence="7">Sperm microtubule inner protein 8</fullName>
    </recommendedName>
    <alternativeName>
        <fullName>Testis, prostate and placenta-expressed protein</fullName>
    </alternativeName>
</protein>
<feature type="chain" id="PRO_0000325777" description="Sperm microtubule inner protein 8">
    <location>
        <begin position="1"/>
        <end position="216"/>
    </location>
</feature>
<feature type="splice variant" id="VSP_032403" description="In isoform 2." evidence="3">
    <original>R</original>
    <variation>RQEALCGAWAGRPCSPDSPRPYPCCPPQ</variation>
    <location>
        <position position="174"/>
    </location>
</feature>
<feature type="sequence variant" id="VAR_060223" description="In dbSNP:rs9934227.">
    <original>S</original>
    <variation>N</variation>
    <location>
        <position position="205"/>
    </location>
</feature>
<feature type="sequence conflict" description="In Ref. 1; AAR18688/AAR18689 and 3; AAI04459/AAI04460." evidence="4" ref="1 3">
    <original>S</original>
    <variation>N</variation>
    <location>
        <position position="178"/>
    </location>
</feature>
<keyword id="KW-0025">Alternative splicing</keyword>
<keyword id="KW-0966">Cell projection</keyword>
<keyword id="KW-0969">Cilium</keyword>
<keyword id="KW-0963">Cytoplasm</keyword>
<keyword id="KW-0206">Cytoskeleton</keyword>
<keyword id="KW-0282">Flagellum</keyword>
<keyword id="KW-1267">Proteomics identification</keyword>
<keyword id="KW-1185">Reference proteome</keyword>
<comment type="function">
    <text evidence="1">Microtubule inner protein (MIP) part of the dynein-decorated doublet microtubules (DMTs) in flagellum axoneme. May serve to reinforce and thus stabilize the microtubule structure in the sperm flagella.</text>
</comment>
<comment type="subunit">
    <text evidence="1">Microtubule inner protein component of sperm flagellar doublet microtubules.</text>
</comment>
<comment type="interaction">
    <interactant intactId="EBI-53990332">
        <id>Q6URK8</id>
    </interactant>
    <interactant intactId="EBI-354921">
        <id>P11021</id>
        <label>HSPA5</label>
    </interactant>
    <organismsDiffer>false</organismsDiffer>
    <experiments>2</experiments>
</comment>
<comment type="subcellular location">
    <subcellularLocation>
        <location evidence="1">Cytoplasm</location>
        <location evidence="1">Cytoskeleton</location>
        <location evidence="1">Flagellum axoneme</location>
    </subcellularLocation>
    <text evidence="1">Localizes to the A-tubules of DMTs.</text>
</comment>
<comment type="alternative products">
    <event type="alternative splicing"/>
    <isoform>
        <id>Q6URK8-1</id>
        <name>1</name>
        <sequence type="displayed"/>
    </isoform>
    <isoform>
        <id>Q6URK8-2</id>
        <name>2</name>
        <sequence type="described" ref="VSP_032403"/>
    </isoform>
</comment>
<comment type="tissue specificity">
    <text evidence="2">Expressed in testis, prostate and placenta.</text>
</comment>
<comment type="sequence caution" evidence="6">
    <conflict type="erroneous initiation">
        <sequence resource="EMBL-CDS" id="AAI04459"/>
    </conflict>
    <text>Extended N-terminus.</text>
</comment>
<comment type="sequence caution" evidence="6">
    <conflict type="erroneous initiation">
        <sequence resource="EMBL-CDS" id="AAI04460"/>
    </conflict>
    <text>Extended N-terminus.</text>
</comment>
<comment type="sequence caution" evidence="5">
    <conflict type="erroneous initiation">
        <sequence resource="EMBL-CDS" id="AAR18688"/>
    </conflict>
    <text>Extended N-terminus.</text>
</comment>
<comment type="sequence caution" evidence="5">
    <conflict type="erroneous initiation">
        <sequence resource="EMBL-CDS" id="AAR18689"/>
    </conflict>
    <text>Extended N-terminus.</text>
</comment>